<dbReference type="EC" id="2.7.4.9" evidence="1"/>
<dbReference type="EMBL" id="AE014291">
    <property type="protein sequence ID" value="AAN29915.1"/>
    <property type="status" value="ALT_INIT"/>
    <property type="molecule type" value="Genomic_DNA"/>
</dbReference>
<dbReference type="EMBL" id="CP002997">
    <property type="protein sequence ID" value="AEM18332.1"/>
    <property type="status" value="ALT_INIT"/>
    <property type="molecule type" value="Genomic_DNA"/>
</dbReference>
<dbReference type="RefSeq" id="WP_004690816.1">
    <property type="nucleotide sequence ID" value="NZ_KN046804.1"/>
</dbReference>
<dbReference type="SMR" id="Q8G0U3"/>
<dbReference type="GeneID" id="45052045"/>
<dbReference type="KEGG" id="bms:BR0992"/>
<dbReference type="KEGG" id="bsi:BS1330_I0988"/>
<dbReference type="PATRIC" id="fig|204722.21.peg.729"/>
<dbReference type="HOGENOM" id="CLU_049131_0_0_5"/>
<dbReference type="PhylomeDB" id="Q8G0U3"/>
<dbReference type="Proteomes" id="UP000007104">
    <property type="component" value="Chromosome I"/>
</dbReference>
<dbReference type="GO" id="GO:0005829">
    <property type="term" value="C:cytosol"/>
    <property type="evidence" value="ECO:0007669"/>
    <property type="project" value="TreeGrafter"/>
</dbReference>
<dbReference type="GO" id="GO:0005524">
    <property type="term" value="F:ATP binding"/>
    <property type="evidence" value="ECO:0007669"/>
    <property type="project" value="UniProtKB-UniRule"/>
</dbReference>
<dbReference type="GO" id="GO:0004798">
    <property type="term" value="F:dTMP kinase activity"/>
    <property type="evidence" value="ECO:0007669"/>
    <property type="project" value="UniProtKB-UniRule"/>
</dbReference>
<dbReference type="GO" id="GO:0006233">
    <property type="term" value="P:dTDP biosynthetic process"/>
    <property type="evidence" value="ECO:0007669"/>
    <property type="project" value="InterPro"/>
</dbReference>
<dbReference type="GO" id="GO:0006235">
    <property type="term" value="P:dTTP biosynthetic process"/>
    <property type="evidence" value="ECO:0007669"/>
    <property type="project" value="UniProtKB-UniRule"/>
</dbReference>
<dbReference type="GO" id="GO:0006227">
    <property type="term" value="P:dUDP biosynthetic process"/>
    <property type="evidence" value="ECO:0007669"/>
    <property type="project" value="TreeGrafter"/>
</dbReference>
<dbReference type="CDD" id="cd01672">
    <property type="entry name" value="TMPK"/>
    <property type="match status" value="1"/>
</dbReference>
<dbReference type="FunFam" id="3.40.50.300:FF:000225">
    <property type="entry name" value="Thymidylate kinase"/>
    <property type="match status" value="1"/>
</dbReference>
<dbReference type="Gene3D" id="3.40.50.300">
    <property type="entry name" value="P-loop containing nucleotide triphosphate hydrolases"/>
    <property type="match status" value="1"/>
</dbReference>
<dbReference type="HAMAP" id="MF_00165">
    <property type="entry name" value="Thymidylate_kinase"/>
    <property type="match status" value="1"/>
</dbReference>
<dbReference type="InterPro" id="IPR027417">
    <property type="entry name" value="P-loop_NTPase"/>
</dbReference>
<dbReference type="InterPro" id="IPR039430">
    <property type="entry name" value="Thymidylate_kin-like_dom"/>
</dbReference>
<dbReference type="InterPro" id="IPR018095">
    <property type="entry name" value="Thymidylate_kin_CS"/>
</dbReference>
<dbReference type="InterPro" id="IPR018094">
    <property type="entry name" value="Thymidylate_kinase"/>
</dbReference>
<dbReference type="NCBIfam" id="TIGR00041">
    <property type="entry name" value="DTMP_kinase"/>
    <property type="match status" value="1"/>
</dbReference>
<dbReference type="PANTHER" id="PTHR10344">
    <property type="entry name" value="THYMIDYLATE KINASE"/>
    <property type="match status" value="1"/>
</dbReference>
<dbReference type="PANTHER" id="PTHR10344:SF4">
    <property type="entry name" value="UMP-CMP KINASE 2, MITOCHONDRIAL"/>
    <property type="match status" value="1"/>
</dbReference>
<dbReference type="Pfam" id="PF02223">
    <property type="entry name" value="Thymidylate_kin"/>
    <property type="match status" value="1"/>
</dbReference>
<dbReference type="SUPFAM" id="SSF52540">
    <property type="entry name" value="P-loop containing nucleoside triphosphate hydrolases"/>
    <property type="match status" value="1"/>
</dbReference>
<dbReference type="PROSITE" id="PS01331">
    <property type="entry name" value="THYMIDYLATE_KINASE"/>
    <property type="match status" value="1"/>
</dbReference>
<organism>
    <name type="scientific">Brucella suis biovar 1 (strain 1330)</name>
    <dbReference type="NCBI Taxonomy" id="204722"/>
    <lineage>
        <taxon>Bacteria</taxon>
        <taxon>Pseudomonadati</taxon>
        <taxon>Pseudomonadota</taxon>
        <taxon>Alphaproteobacteria</taxon>
        <taxon>Hyphomicrobiales</taxon>
        <taxon>Brucellaceae</taxon>
        <taxon>Brucella/Ochrobactrum group</taxon>
        <taxon>Brucella</taxon>
    </lineage>
</organism>
<gene>
    <name evidence="1" type="primary">tmk</name>
    <name type="ordered locus">BR0992</name>
    <name type="ordered locus">BS1330_I0988</name>
</gene>
<proteinExistence type="inferred from homology"/>
<accession>Q8G0U3</accession>
<accession>G0K9R6</accession>
<comment type="function">
    <text evidence="1">Phosphorylation of dTMP to form dTDP in both de novo and salvage pathways of dTTP synthesis.</text>
</comment>
<comment type="catalytic activity">
    <reaction evidence="1">
        <text>dTMP + ATP = dTDP + ADP</text>
        <dbReference type="Rhea" id="RHEA:13517"/>
        <dbReference type="ChEBI" id="CHEBI:30616"/>
        <dbReference type="ChEBI" id="CHEBI:58369"/>
        <dbReference type="ChEBI" id="CHEBI:63528"/>
        <dbReference type="ChEBI" id="CHEBI:456216"/>
        <dbReference type="EC" id="2.7.4.9"/>
    </reaction>
</comment>
<comment type="similarity">
    <text evidence="1">Belongs to the thymidylate kinase family.</text>
</comment>
<comment type="sequence caution" evidence="2">
    <conflict type="erroneous initiation">
        <sequence resource="EMBL-CDS" id="AAN29915"/>
    </conflict>
</comment>
<comment type="sequence caution" evidence="2">
    <conflict type="erroneous initiation">
        <sequence resource="EMBL-CDS" id="AEM18332"/>
    </conflict>
    <text>Truncated N-terminus.</text>
</comment>
<feature type="chain" id="PRO_0000155248" description="Thymidylate kinase">
    <location>
        <begin position="1"/>
        <end position="214"/>
    </location>
</feature>
<feature type="binding site" evidence="1">
    <location>
        <begin position="10"/>
        <end position="17"/>
    </location>
    <ligand>
        <name>ATP</name>
        <dbReference type="ChEBI" id="CHEBI:30616"/>
    </ligand>
</feature>
<reference key="1">
    <citation type="journal article" date="2002" name="Proc. Natl. Acad. Sci. U.S.A.">
        <title>The Brucella suis genome reveals fundamental similarities between animal and plant pathogens and symbionts.</title>
        <authorList>
            <person name="Paulsen I.T."/>
            <person name="Seshadri R."/>
            <person name="Nelson K.E."/>
            <person name="Eisen J.A."/>
            <person name="Heidelberg J.F."/>
            <person name="Read T.D."/>
            <person name="Dodson R.J."/>
            <person name="Umayam L.A."/>
            <person name="Brinkac L.M."/>
            <person name="Beanan M.J."/>
            <person name="Daugherty S.C."/>
            <person name="DeBoy R.T."/>
            <person name="Durkin A.S."/>
            <person name="Kolonay J.F."/>
            <person name="Madupu R."/>
            <person name="Nelson W.C."/>
            <person name="Ayodeji B."/>
            <person name="Kraul M."/>
            <person name="Shetty J."/>
            <person name="Malek J.A."/>
            <person name="Van Aken S.E."/>
            <person name="Riedmuller S."/>
            <person name="Tettelin H."/>
            <person name="Gill S.R."/>
            <person name="White O."/>
            <person name="Salzberg S.L."/>
            <person name="Hoover D.L."/>
            <person name="Lindler L.E."/>
            <person name="Halling S.M."/>
            <person name="Boyle S.M."/>
            <person name="Fraser C.M."/>
        </authorList>
    </citation>
    <scope>NUCLEOTIDE SEQUENCE [LARGE SCALE GENOMIC DNA]</scope>
    <source>
        <strain>1330</strain>
    </source>
</reference>
<reference key="2">
    <citation type="journal article" date="2011" name="J. Bacteriol.">
        <title>Revised genome sequence of Brucella suis 1330.</title>
        <authorList>
            <person name="Tae H."/>
            <person name="Shallom S."/>
            <person name="Settlage R."/>
            <person name="Preston D."/>
            <person name="Adams L.G."/>
            <person name="Garner H.R."/>
        </authorList>
    </citation>
    <scope>NUCLEOTIDE SEQUENCE [LARGE SCALE GENOMIC DNA]</scope>
    <source>
        <strain>1330</strain>
    </source>
</reference>
<name>KTHY_BRUSU</name>
<protein>
    <recommendedName>
        <fullName evidence="1">Thymidylate kinase</fullName>
        <ecNumber evidence="1">2.7.4.9</ecNumber>
    </recommendedName>
    <alternativeName>
        <fullName evidence="1">dTMP kinase</fullName>
    </alternativeName>
</protein>
<sequence>MSGLFITFEGGEGAGKSTQIALLASHLRNHGFDPVITREPGGSPGAEAIRHVILSGNAETYGPAMEALLFAAARADHVDQLIRPALAEGRIVLCDRFIDSSRAYQGVTGNLDATYMAAIERIAIDGAMPDLTLVLDICAERGLSRAGKRRGSDTADRFEKEDIAVHEARRQAFLEIARQEPARCKVIDADRSQEKIADEIRSVVDTILTEKGLL</sequence>
<keyword id="KW-0067">ATP-binding</keyword>
<keyword id="KW-0418">Kinase</keyword>
<keyword id="KW-0545">Nucleotide biosynthesis</keyword>
<keyword id="KW-0547">Nucleotide-binding</keyword>
<keyword id="KW-0808">Transferase</keyword>
<evidence type="ECO:0000255" key="1">
    <source>
        <dbReference type="HAMAP-Rule" id="MF_00165"/>
    </source>
</evidence>
<evidence type="ECO:0000305" key="2"/>